<name>SELU_ECOLC</name>
<proteinExistence type="inferred from homology"/>
<keyword id="KW-0711">Selenium</keyword>
<keyword id="KW-0808">Transferase</keyword>
<dbReference type="EC" id="2.9.1.3" evidence="1"/>
<dbReference type="EMBL" id="CP000946">
    <property type="protein sequence ID" value="ACA78742.1"/>
    <property type="molecule type" value="Genomic_DNA"/>
</dbReference>
<dbReference type="SMR" id="B1IZ97"/>
<dbReference type="KEGG" id="ecl:EcolC_3119"/>
<dbReference type="HOGENOM" id="CLU_043456_1_0_6"/>
<dbReference type="GO" id="GO:0016765">
    <property type="term" value="F:transferase activity, transferring alkyl or aryl (other than methyl) groups"/>
    <property type="evidence" value="ECO:0007669"/>
    <property type="project" value="UniProtKB-UniRule"/>
</dbReference>
<dbReference type="GO" id="GO:0043828">
    <property type="term" value="F:tRNA 2-selenouridine synthase activity"/>
    <property type="evidence" value="ECO:0007669"/>
    <property type="project" value="UniProtKB-EC"/>
</dbReference>
<dbReference type="GO" id="GO:0002098">
    <property type="term" value="P:tRNA wobble uridine modification"/>
    <property type="evidence" value="ECO:0007669"/>
    <property type="project" value="UniProtKB-UniRule"/>
</dbReference>
<dbReference type="CDD" id="cd01520">
    <property type="entry name" value="RHOD_YbbB"/>
    <property type="match status" value="1"/>
</dbReference>
<dbReference type="FunFam" id="3.40.250.10:FF:000009">
    <property type="entry name" value="tRNA 2-selenouridine/geranyl-2-thiouridine synthase"/>
    <property type="match status" value="1"/>
</dbReference>
<dbReference type="Gene3D" id="3.40.250.10">
    <property type="entry name" value="Rhodanese-like domain"/>
    <property type="match status" value="1"/>
</dbReference>
<dbReference type="HAMAP" id="MF_01622">
    <property type="entry name" value="tRNA_sel_U_synth"/>
    <property type="match status" value="1"/>
</dbReference>
<dbReference type="InterPro" id="IPR001763">
    <property type="entry name" value="Rhodanese-like_dom"/>
</dbReference>
<dbReference type="InterPro" id="IPR036873">
    <property type="entry name" value="Rhodanese-like_dom_sf"/>
</dbReference>
<dbReference type="InterPro" id="IPR017582">
    <property type="entry name" value="SelU"/>
</dbReference>
<dbReference type="NCBIfam" id="NF008749">
    <property type="entry name" value="PRK11784.1-1"/>
    <property type="match status" value="1"/>
</dbReference>
<dbReference type="NCBIfam" id="NF008751">
    <property type="entry name" value="PRK11784.1-3"/>
    <property type="match status" value="1"/>
</dbReference>
<dbReference type="NCBIfam" id="TIGR03167">
    <property type="entry name" value="tRNA_sel_U_synt"/>
    <property type="match status" value="1"/>
</dbReference>
<dbReference type="PANTHER" id="PTHR30401">
    <property type="entry name" value="TRNA 2-SELENOURIDINE SYNTHASE"/>
    <property type="match status" value="1"/>
</dbReference>
<dbReference type="PANTHER" id="PTHR30401:SF0">
    <property type="entry name" value="TRNA 2-SELENOURIDINE SYNTHASE"/>
    <property type="match status" value="1"/>
</dbReference>
<dbReference type="Pfam" id="PF00581">
    <property type="entry name" value="Rhodanese"/>
    <property type="match status" value="1"/>
</dbReference>
<dbReference type="SMART" id="SM00450">
    <property type="entry name" value="RHOD"/>
    <property type="match status" value="1"/>
</dbReference>
<dbReference type="SUPFAM" id="SSF52821">
    <property type="entry name" value="Rhodanese/Cell cycle control phosphatase"/>
    <property type="match status" value="1"/>
</dbReference>
<dbReference type="PROSITE" id="PS50206">
    <property type="entry name" value="RHODANESE_3"/>
    <property type="match status" value="1"/>
</dbReference>
<reference key="1">
    <citation type="submission" date="2008-02" db="EMBL/GenBank/DDBJ databases">
        <title>Complete sequence of Escherichia coli C str. ATCC 8739.</title>
        <authorList>
            <person name="Copeland A."/>
            <person name="Lucas S."/>
            <person name="Lapidus A."/>
            <person name="Glavina del Rio T."/>
            <person name="Dalin E."/>
            <person name="Tice H."/>
            <person name="Bruce D."/>
            <person name="Goodwin L."/>
            <person name="Pitluck S."/>
            <person name="Kiss H."/>
            <person name="Brettin T."/>
            <person name="Detter J.C."/>
            <person name="Han C."/>
            <person name="Kuske C.R."/>
            <person name="Schmutz J."/>
            <person name="Larimer F."/>
            <person name="Land M."/>
            <person name="Hauser L."/>
            <person name="Kyrpides N."/>
            <person name="Mikhailova N."/>
            <person name="Ingram L."/>
            <person name="Richardson P."/>
        </authorList>
    </citation>
    <scope>NUCLEOTIDE SEQUENCE [LARGE SCALE GENOMIC DNA]</scope>
    <source>
        <strain>ATCC 8739 / DSM 1576 / NBRC 3972 / NCIMB 8545 / WDCM 00012 / Crooks</strain>
    </source>
</reference>
<feature type="chain" id="PRO_1000088086" description="tRNA 2-selenouridine synthase">
    <location>
        <begin position="1"/>
        <end position="364"/>
    </location>
</feature>
<feature type="domain" description="Rhodanese" evidence="1">
    <location>
        <begin position="14"/>
        <end position="137"/>
    </location>
</feature>
<feature type="active site" description="S-selanylcysteine intermediate" evidence="1">
    <location>
        <position position="97"/>
    </location>
</feature>
<evidence type="ECO:0000255" key="1">
    <source>
        <dbReference type="HAMAP-Rule" id="MF_01622"/>
    </source>
</evidence>
<protein>
    <recommendedName>
        <fullName evidence="1">tRNA 2-selenouridine synthase</fullName>
        <ecNumber evidence="1">2.9.1.3</ecNumber>
    </recommendedName>
</protein>
<gene>
    <name evidence="1" type="primary">selU</name>
    <name type="ordered locus">EcolC_3119</name>
</gene>
<organism>
    <name type="scientific">Escherichia coli (strain ATCC 8739 / DSM 1576 / NBRC 3972 / NCIMB 8545 / WDCM 00012 / Crooks)</name>
    <dbReference type="NCBI Taxonomy" id="481805"/>
    <lineage>
        <taxon>Bacteria</taxon>
        <taxon>Pseudomonadati</taxon>
        <taxon>Pseudomonadota</taxon>
        <taxon>Gammaproteobacteria</taxon>
        <taxon>Enterobacterales</taxon>
        <taxon>Enterobacteriaceae</taxon>
        <taxon>Escherichia</taxon>
    </lineage>
</organism>
<comment type="function">
    <text evidence="1">Involved in the post-transcriptional modification of the uridine at the wobble position (U34) of tRNA(Lys), tRNA(Glu) and tRNA(Gln). Catalyzes the conversion of 2-thiouridine (S2U-RNA) to 2-selenouridine (Se2U-RNA). Acts in a two-step process involving geranylation of 2-thiouridine (S2U) to S-geranyl-2-thiouridine (geS2U) and subsequent selenation of the latter derivative to 2-selenouridine (Se2U) in the tRNA chain.</text>
</comment>
<comment type="catalytic activity">
    <reaction evidence="1">
        <text>5-methylaminomethyl-2-thiouridine(34) in tRNA + selenophosphate + (2E)-geranyl diphosphate + H2O + H(+) = 5-methylaminomethyl-2-selenouridine(34) in tRNA + (2E)-thiogeraniol + phosphate + diphosphate</text>
        <dbReference type="Rhea" id="RHEA:42716"/>
        <dbReference type="Rhea" id="RHEA-COMP:10195"/>
        <dbReference type="Rhea" id="RHEA-COMP:10196"/>
        <dbReference type="ChEBI" id="CHEBI:15377"/>
        <dbReference type="ChEBI" id="CHEBI:15378"/>
        <dbReference type="ChEBI" id="CHEBI:16144"/>
        <dbReference type="ChEBI" id="CHEBI:33019"/>
        <dbReference type="ChEBI" id="CHEBI:43474"/>
        <dbReference type="ChEBI" id="CHEBI:58057"/>
        <dbReference type="ChEBI" id="CHEBI:74455"/>
        <dbReference type="ChEBI" id="CHEBI:82743"/>
        <dbReference type="ChEBI" id="CHEBI:143703"/>
        <dbReference type="EC" id="2.9.1.3"/>
    </reaction>
    <physiologicalReaction direction="left-to-right" evidence="1">
        <dbReference type="Rhea" id="RHEA:42717"/>
    </physiologicalReaction>
</comment>
<comment type="catalytic activity">
    <reaction evidence="1">
        <text>5-methylaminomethyl-2-thiouridine(34) in tRNA + (2E)-geranyl diphosphate = 5-methylaminomethyl-S-(2E)-geranyl-thiouridine(34) in tRNA + diphosphate</text>
        <dbReference type="Rhea" id="RHEA:14085"/>
        <dbReference type="Rhea" id="RHEA-COMP:10195"/>
        <dbReference type="Rhea" id="RHEA-COMP:14654"/>
        <dbReference type="ChEBI" id="CHEBI:33019"/>
        <dbReference type="ChEBI" id="CHEBI:58057"/>
        <dbReference type="ChEBI" id="CHEBI:74455"/>
        <dbReference type="ChEBI" id="CHEBI:140632"/>
    </reaction>
    <physiologicalReaction direction="left-to-right" evidence="1">
        <dbReference type="Rhea" id="RHEA:14086"/>
    </physiologicalReaction>
</comment>
<comment type="catalytic activity">
    <reaction evidence="1">
        <text>5-methylaminomethyl-S-(2E)-geranyl-thiouridine(34) in tRNA + selenophosphate + H(+) = 5-methylaminomethyl-2-(Se-phospho)selenouridine(34) in tRNA + (2E)-thiogeraniol</text>
        <dbReference type="Rhea" id="RHEA:60172"/>
        <dbReference type="Rhea" id="RHEA-COMP:14654"/>
        <dbReference type="Rhea" id="RHEA-COMP:15523"/>
        <dbReference type="ChEBI" id="CHEBI:15378"/>
        <dbReference type="ChEBI" id="CHEBI:16144"/>
        <dbReference type="ChEBI" id="CHEBI:140632"/>
        <dbReference type="ChEBI" id="CHEBI:143702"/>
        <dbReference type="ChEBI" id="CHEBI:143703"/>
    </reaction>
    <physiologicalReaction direction="left-to-right" evidence="1">
        <dbReference type="Rhea" id="RHEA:60173"/>
    </physiologicalReaction>
</comment>
<comment type="catalytic activity">
    <reaction evidence="1">
        <text>5-methylaminomethyl-2-(Se-phospho)selenouridine(34) in tRNA + H2O = 5-methylaminomethyl-2-selenouridine(34) in tRNA + phosphate</text>
        <dbReference type="Rhea" id="RHEA:60176"/>
        <dbReference type="Rhea" id="RHEA-COMP:10196"/>
        <dbReference type="Rhea" id="RHEA-COMP:15523"/>
        <dbReference type="ChEBI" id="CHEBI:15377"/>
        <dbReference type="ChEBI" id="CHEBI:43474"/>
        <dbReference type="ChEBI" id="CHEBI:82743"/>
        <dbReference type="ChEBI" id="CHEBI:143702"/>
    </reaction>
    <physiologicalReaction direction="left-to-right" evidence="1">
        <dbReference type="Rhea" id="RHEA:60177"/>
    </physiologicalReaction>
</comment>
<comment type="subunit">
    <text evidence="1">Monomer.</text>
</comment>
<comment type="similarity">
    <text evidence="1">Belongs to the SelU family.</text>
</comment>
<accession>B1IZ97</accession>
<sequence>MQERHTEQDYRALLIADTPIIDVRAPIEFEQGAMPAAINLPLMNNDERAAVGTCYKQQGSDAALALGHKLVAGEIRQQRMDAWRAACLQNPQGILCCARGGQRSHIVQSWLHAAGIDYPLVEGGYKALRQTAIQATIELAQKPIVLIGGCTGSGKTLLVQQQPNGVDLEGLARHRGSAFGRTLQPQLSQASFENLLAAEMLKTDARQNLRLWVLEDESRMIGSNHLPECLRERMTQAAIAVVEDPFEIRLERLNEEYFLRMHHDFTHAYGDEQGWQEYCEYLHHGLSAIKRRLGLQRYNELAAQLDTALTTQLTTGSTDGHLAWLVPLLKEYYDPMYRYQLEKKAEKVVFRGEWAEVAEWVKAQ</sequence>